<name>MDTC_SHIBS</name>
<feature type="chain" id="PRO_1000024317" description="Multidrug resistance protein MdtC">
    <location>
        <begin position="1"/>
        <end position="1025"/>
    </location>
</feature>
<feature type="transmembrane region" description="Helical" evidence="1">
    <location>
        <begin position="3"/>
        <end position="23"/>
    </location>
</feature>
<feature type="transmembrane region" description="Helical" evidence="1">
    <location>
        <begin position="333"/>
        <end position="353"/>
    </location>
</feature>
<feature type="transmembrane region" description="Helical" evidence="1">
    <location>
        <begin position="360"/>
        <end position="380"/>
    </location>
</feature>
<feature type="transmembrane region" description="Helical" evidence="1">
    <location>
        <begin position="387"/>
        <end position="407"/>
    </location>
</feature>
<feature type="transmembrane region" description="Helical" evidence="1">
    <location>
        <begin position="431"/>
        <end position="451"/>
    </location>
</feature>
<feature type="transmembrane region" description="Helical" evidence="1">
    <location>
        <begin position="463"/>
        <end position="483"/>
    </location>
</feature>
<feature type="transmembrane region" description="Helical" evidence="1">
    <location>
        <begin position="528"/>
        <end position="548"/>
    </location>
</feature>
<feature type="transmembrane region" description="Helical" evidence="1">
    <location>
        <begin position="853"/>
        <end position="873"/>
    </location>
</feature>
<feature type="transmembrane region" description="Helical" evidence="1">
    <location>
        <begin position="875"/>
        <end position="895"/>
    </location>
</feature>
<feature type="transmembrane region" description="Helical" evidence="1">
    <location>
        <begin position="897"/>
        <end position="917"/>
    </location>
</feature>
<feature type="transmembrane region" description="Helical" evidence="1">
    <location>
        <begin position="953"/>
        <end position="973"/>
    </location>
</feature>
<feature type="transmembrane region" description="Helical" evidence="1">
    <location>
        <begin position="984"/>
        <end position="1004"/>
    </location>
</feature>
<proteinExistence type="inferred from homology"/>
<accession>Q323D9</accession>
<comment type="subunit">
    <text evidence="1">Part of a tripartite efflux system composed of MdtA, MdtB and MdtC. MdtC forms a heteromultimer with MdtB.</text>
</comment>
<comment type="subcellular location">
    <subcellularLocation>
        <location evidence="1">Cell inner membrane</location>
        <topology evidence="1">Multi-pass membrane protein</topology>
    </subcellularLocation>
</comment>
<comment type="similarity">
    <text evidence="1">Belongs to the resistance-nodulation-cell division (RND) (TC 2.A.6) family. MdtC subfamily.</text>
</comment>
<keyword id="KW-0997">Cell inner membrane</keyword>
<keyword id="KW-1003">Cell membrane</keyword>
<keyword id="KW-0472">Membrane</keyword>
<keyword id="KW-0812">Transmembrane</keyword>
<keyword id="KW-1133">Transmembrane helix</keyword>
<keyword id="KW-0813">Transport</keyword>
<sequence>MKFFALFIYRPVATILLSVAITLCGILGFRMLPVAPLPQVDFPVIMVSASLPGASPETMASSVATPLERSLGRIAGVSEMTSSSSLGSTRIILQFDFDRDINGAARDVQAAINAAQSLLPSGMPSRPTYRKANPSDAPIMILTLTSDTYSQGKLYDFASTQLAPTISQIDGVGDVDVGGSSLPAVRVGLNPQALFNQGVSLDDVRTAISNANVRKPQGALEDGTHRWQIQTNDELKTAAEYQPLIIHYNNGGAVRLGDVATVTDSVQDVRNAGMTNAKPAILLMIRKLPEANIIQTVDSIRAKLPELQETIPAAIDLQIAQDRSPTIRASLEEVEQTLIISVALVILVVFLFLRSGRATIIPAVAVPVSLIGTFAAMYLCGFSLNNLSLMALTIATGFVVDDAIVVLENIARHLEAGMKPLQAALQGTREVGFTVLSMSLSLVAVFLPLLLMGGLPGRLLREFAVTLSVAIGISLLVSLTLTPMMCGWMLKASKPREQKRLRGFGRMLVALQQGYGKSLKWVLNHTRLVGVVLLGTIALNIWLYISIPKTFFPEQDTGVLMGGIQADQSISFQAMRGKLQDFMKIIRDDPAVDNVTGFTGGSRVNSGMMFITLKPRDERSETAQQIIDRLRVKLAKEPGANLFLMAVQDIRVGGRQSNASYQYTLLSDDLAALREWEPKIRKKLATLPELADVNSDQQDNGAEMNLVYDRDTMARLGIDVQAANSLLNNAFGQRQISTIYQPMNQYKVVMEVDPRYTQDISALEKMFVINNEGKAIPLSYFAKWQPANAPLSVNHQGLSAASTISFNLPTGKSLSDASAAIDRAMTQLGVPSTVRGSFAGTAQVFQETMNSQVILIIAAIATVYIVLGILYESYVHPLTILSTLPSAGVGALLALELFNAPFSLIALIGIMLLIGIVKKNAIMMVDFALEAQRHGNLTPQEAIFQACLLRFRPIMMTTLAALFGALPLVLSGGDGSELRQPLGITIVGGLVMSQLLTLYTTPVVYLFFDRLRLRFSRKPKQTVTE</sequence>
<gene>
    <name evidence="1" type="primary">mdtC</name>
    <name type="ordered locus">SBO_0902</name>
</gene>
<dbReference type="EMBL" id="CP000036">
    <property type="protein sequence ID" value="ABB65569.1"/>
    <property type="molecule type" value="Genomic_DNA"/>
</dbReference>
<dbReference type="RefSeq" id="WP_000667597.1">
    <property type="nucleotide sequence ID" value="NC_007613.1"/>
</dbReference>
<dbReference type="SMR" id="Q323D9"/>
<dbReference type="KEGG" id="sbo:SBO_0902"/>
<dbReference type="HOGENOM" id="CLU_002755_1_2_6"/>
<dbReference type="Proteomes" id="UP000007067">
    <property type="component" value="Chromosome"/>
</dbReference>
<dbReference type="GO" id="GO:0005886">
    <property type="term" value="C:plasma membrane"/>
    <property type="evidence" value="ECO:0007669"/>
    <property type="project" value="UniProtKB-SubCell"/>
</dbReference>
<dbReference type="GO" id="GO:0042910">
    <property type="term" value="F:xenobiotic transmembrane transporter activity"/>
    <property type="evidence" value="ECO:0007669"/>
    <property type="project" value="TreeGrafter"/>
</dbReference>
<dbReference type="FunFam" id="1.20.1640.10:FF:000001">
    <property type="entry name" value="Efflux pump membrane transporter"/>
    <property type="match status" value="1"/>
</dbReference>
<dbReference type="FunFam" id="3.30.70.1430:FF:000001">
    <property type="entry name" value="Efflux pump membrane transporter"/>
    <property type="match status" value="1"/>
</dbReference>
<dbReference type="FunFam" id="3.30.2090.10:FF:000004">
    <property type="entry name" value="Multidrug resistance protein MdtC"/>
    <property type="match status" value="1"/>
</dbReference>
<dbReference type="FunFam" id="3.30.2090.10:FF:000005">
    <property type="entry name" value="Multidrug resistance protein MdtC"/>
    <property type="match status" value="1"/>
</dbReference>
<dbReference type="FunFam" id="3.30.70.1430:FF:000004">
    <property type="entry name" value="Multidrug resistance protein MdtC"/>
    <property type="match status" value="1"/>
</dbReference>
<dbReference type="Gene3D" id="3.30.70.1430">
    <property type="entry name" value="Multidrug efflux transporter AcrB pore domain"/>
    <property type="match status" value="2"/>
</dbReference>
<dbReference type="Gene3D" id="3.30.70.1440">
    <property type="entry name" value="Multidrug efflux transporter AcrB pore domain"/>
    <property type="match status" value="1"/>
</dbReference>
<dbReference type="Gene3D" id="3.30.70.1320">
    <property type="entry name" value="Multidrug efflux transporter AcrB pore domain like"/>
    <property type="match status" value="1"/>
</dbReference>
<dbReference type="Gene3D" id="3.30.2090.10">
    <property type="entry name" value="Multidrug efflux transporter AcrB TolC docking domain, DN and DC subdomains"/>
    <property type="match status" value="2"/>
</dbReference>
<dbReference type="Gene3D" id="1.20.1640.10">
    <property type="entry name" value="Multidrug efflux transporter AcrB transmembrane domain"/>
    <property type="match status" value="2"/>
</dbReference>
<dbReference type="HAMAP" id="MF_01424">
    <property type="entry name" value="MdtC"/>
    <property type="match status" value="1"/>
</dbReference>
<dbReference type="InterPro" id="IPR027463">
    <property type="entry name" value="AcrB_DN_DC_subdom"/>
</dbReference>
<dbReference type="InterPro" id="IPR001036">
    <property type="entry name" value="Acrflvin-R"/>
</dbReference>
<dbReference type="InterPro" id="IPR023931">
    <property type="entry name" value="Multidrug-R_MdtC"/>
</dbReference>
<dbReference type="NCBIfam" id="NF007905">
    <property type="entry name" value="PRK10614.1"/>
    <property type="match status" value="1"/>
</dbReference>
<dbReference type="NCBIfam" id="NF033617">
    <property type="entry name" value="RND_permease_2"/>
    <property type="match status" value="1"/>
</dbReference>
<dbReference type="PANTHER" id="PTHR32063">
    <property type="match status" value="1"/>
</dbReference>
<dbReference type="PANTHER" id="PTHR32063:SF34">
    <property type="entry name" value="MULTIDRUG RESISTANCE PROTEIN MDTC"/>
    <property type="match status" value="1"/>
</dbReference>
<dbReference type="Pfam" id="PF00873">
    <property type="entry name" value="ACR_tran"/>
    <property type="match status" value="1"/>
</dbReference>
<dbReference type="PRINTS" id="PR00702">
    <property type="entry name" value="ACRIFLAVINRP"/>
</dbReference>
<dbReference type="SUPFAM" id="SSF82693">
    <property type="entry name" value="Multidrug efflux transporter AcrB pore domain, PN1, PN2, PC1 and PC2 subdomains"/>
    <property type="match status" value="4"/>
</dbReference>
<dbReference type="SUPFAM" id="SSF82714">
    <property type="entry name" value="Multidrug efflux transporter AcrB TolC docking domain, DN and DC subdomains"/>
    <property type="match status" value="2"/>
</dbReference>
<dbReference type="SUPFAM" id="SSF82866">
    <property type="entry name" value="Multidrug efflux transporter AcrB transmembrane domain"/>
    <property type="match status" value="2"/>
</dbReference>
<protein>
    <recommendedName>
        <fullName evidence="1">Multidrug resistance protein MdtC</fullName>
    </recommendedName>
    <alternativeName>
        <fullName evidence="1">Multidrug transporter MdtC</fullName>
    </alternativeName>
</protein>
<evidence type="ECO:0000255" key="1">
    <source>
        <dbReference type="HAMAP-Rule" id="MF_01424"/>
    </source>
</evidence>
<organism>
    <name type="scientific">Shigella boydii serotype 4 (strain Sb227)</name>
    <dbReference type="NCBI Taxonomy" id="300268"/>
    <lineage>
        <taxon>Bacteria</taxon>
        <taxon>Pseudomonadati</taxon>
        <taxon>Pseudomonadota</taxon>
        <taxon>Gammaproteobacteria</taxon>
        <taxon>Enterobacterales</taxon>
        <taxon>Enterobacteriaceae</taxon>
        <taxon>Shigella</taxon>
    </lineage>
</organism>
<reference key="1">
    <citation type="journal article" date="2005" name="Nucleic Acids Res.">
        <title>Genome dynamics and diversity of Shigella species, the etiologic agents of bacillary dysentery.</title>
        <authorList>
            <person name="Yang F."/>
            <person name="Yang J."/>
            <person name="Zhang X."/>
            <person name="Chen L."/>
            <person name="Jiang Y."/>
            <person name="Yan Y."/>
            <person name="Tang X."/>
            <person name="Wang J."/>
            <person name="Xiong Z."/>
            <person name="Dong J."/>
            <person name="Xue Y."/>
            <person name="Zhu Y."/>
            <person name="Xu X."/>
            <person name="Sun L."/>
            <person name="Chen S."/>
            <person name="Nie H."/>
            <person name="Peng J."/>
            <person name="Xu J."/>
            <person name="Wang Y."/>
            <person name="Yuan Z."/>
            <person name="Wen Y."/>
            <person name="Yao Z."/>
            <person name="Shen Y."/>
            <person name="Qiang B."/>
            <person name="Hou Y."/>
            <person name="Yu J."/>
            <person name="Jin Q."/>
        </authorList>
    </citation>
    <scope>NUCLEOTIDE SEQUENCE [LARGE SCALE GENOMIC DNA]</scope>
    <source>
        <strain>Sb227</strain>
    </source>
</reference>